<accession>A4UHQ3</accession>
<accession>Q49IM7</accession>
<accession>Q49IM8</accession>
<accession>Q49IN0</accession>
<accession>Q49IN1</accession>
<accession>Q49IN2</accession>
<accession>Q66535</accession>
<reference key="1">
    <citation type="journal article" date="1995" name="Virology">
        <title>Genetic polymorphism in the rabies virus nucleoprotein gene.</title>
        <authorList>
            <person name="Kissi B."/>
            <person name="Tordo N."/>
            <person name="Bourhy H."/>
        </authorList>
    </citation>
    <scope>NUCLEOTIDE SEQUENCE [GENOMIC RNA]</scope>
    <source>
        <strain>Isolate Holland/9018/1987</strain>
    </source>
</reference>
<reference key="2">
    <citation type="journal article" date="2005" name="J. Virol.">
        <title>Phylogeography, population dynamics, and molecular evolution of European bat lyssaviruses.</title>
        <authorList>
            <person name="Davis P.L."/>
            <person name="Holmes E.C."/>
            <person name="Larrous F."/>
            <person name="Van der Poel W.H."/>
            <person name="Tjornehoj K."/>
            <person name="Alonso W.J."/>
            <person name="Bourhy H."/>
        </authorList>
    </citation>
    <scope>NUCLEOTIDE SEQUENCE [GENOMIC RNA]</scope>
    <source>
        <strain>Isolate Holland/9018/1987</strain>
        <strain>Isolate Holland/9375/1993</strain>
        <strain>Isolate Holland/94112/1989</strain>
        <strain>Isolate Switzerland/02053/2002</strain>
        <strain>Isolate Switzerland/9337/1993</strain>
    </source>
</reference>
<reference key="3">
    <citation type="journal article" date="2007" name="J. Gen. Virol.">
        <title>Comparative analysis of the full genome sequence of European bat lyssavirus type 1 and type 2 with other lyssaviruses and evidence for a conserved transcription termination and polyadenylation motif in the G-L 3' non-translated region.</title>
        <authorList>
            <person name="Marston D.A."/>
            <person name="McElhinney L.M."/>
            <person name="Johnson N."/>
            <person name="Muller T."/>
            <person name="Conzelmann K.K."/>
            <person name="Tordo N."/>
            <person name="Fooks A.R."/>
        </authorList>
    </citation>
    <scope>NUCLEOTIDE SEQUENCE [GENOMIC RNA]</scope>
</reference>
<evidence type="ECO:0000250" key="1"/>
<evidence type="ECO:0000305" key="2"/>
<feature type="chain" id="PRO_0000297609" description="Nucleoprotein">
    <location>
        <begin position="1"/>
        <end position="451"/>
    </location>
</feature>
<feature type="modified residue" description="Phosphoserine; by host" evidence="1">
    <location>
        <position position="389"/>
    </location>
</feature>
<feature type="sequence variant" description="In strain: Isolate Holland/9018/1987, Isolate Holland/9375/1993 and Isolate Holland/94112/1989.">
    <original>G</original>
    <variation>E</variation>
    <location>
        <position position="44"/>
    </location>
</feature>
<feature type="sequence variant" description="In strain: Isolate Holland/9375/1993.">
    <original>G</original>
    <variation>A</variation>
    <location>
        <position position="125"/>
    </location>
</feature>
<feature type="sequence variant" description="In strain: Isolate Holland/9018/1987, Isolate Holland/94112/1989, Isolate Holland/9375/1993, Isolate Switzerland/02053/2002 and Isolate Switzerland/9337/1993.">
    <original>L</original>
    <variation>Q</variation>
    <location>
        <position position="126"/>
    </location>
</feature>
<feature type="sequence variant" description="In strain: Isolate Switzerland/02053/2002.">
    <original>T</original>
    <variation>P</variation>
    <location>
        <position position="134"/>
    </location>
</feature>
<feature type="sequence variant" description="In strain: Isolate Holland/9018/1987.">
    <original>E</original>
    <variation>A</variation>
    <location>
        <position position="174"/>
    </location>
</feature>
<feature type="sequence variant" description="In strain: Isolate Holland/9018/1987.">
    <original>F</original>
    <variation>S</variation>
    <location>
        <position position="205"/>
    </location>
</feature>
<feature type="sequence variant" description="In strain: Isolate Holland/9375/1993.">
    <original>R</original>
    <variation>T</variation>
    <location>
        <position position="247"/>
    </location>
</feature>
<feature type="sequence variant" description="In strain: Isolate Switzerland/9337/1993.">
    <original>V</original>
    <variation>I</variation>
    <location>
        <position position="281"/>
    </location>
</feature>
<feature type="sequence variant" description="In strain: Isolate Holland/9018/1987, Isolate Holland/9375/1993 and Isolate Holland/94112/1989.">
    <original>K</original>
    <variation>Q</variation>
    <location>
        <position position="417"/>
    </location>
</feature>
<proteinExistence type="inferred from homology"/>
<organism>
    <name type="scientific">European bat lyssavirus 2 (strain Human/Scotland/RV1333/2002)</name>
    <name type="common">EBLV2</name>
    <dbReference type="NCBI Taxonomy" id="453116"/>
    <lineage>
        <taxon>Viruses</taxon>
        <taxon>Riboviria</taxon>
        <taxon>Orthornavirae</taxon>
        <taxon>Negarnaviricota</taxon>
        <taxon>Haploviricotina</taxon>
        <taxon>Monjiviricetes</taxon>
        <taxon>Mononegavirales</taxon>
        <taxon>Rhabdoviridae</taxon>
        <taxon>Alpharhabdovirinae</taxon>
        <taxon>Lyssavirus</taxon>
        <taxon>Lyssavirus hamburg</taxon>
    </lineage>
</organism>
<gene>
    <name type="primary">N</name>
</gene>
<protein>
    <recommendedName>
        <fullName>Nucleoprotein</fullName>
        <shortName>NP</shortName>
    </recommendedName>
    <alternativeName>
        <fullName>Nucleocapsid protein</fullName>
        <shortName>Protein N</shortName>
    </alternativeName>
</protein>
<comment type="function">
    <text evidence="1">Encapsidates the genome, protecting it from nucleases. If expressed without protein P it binds non-specifically RNA and therefore can bind it's own mRNA. Interaction with protein P abolishes any non-specific RNA binding, and prevents phosphorylation. The soluble N-P complex encapsidates specifically the genomic RNA, with protein N protecting the genome like a pearl necklace. The encapsidated genomic RNA is termed the nucleocapsid (NC) and serves as template for viral transcription and replication. Protein N binds protein P in the NC through a different interaction, and can be phosphorylated. Subsequent viral replication is dependent on intracellular concentration of newly synthesized protein N. During replication, encapsidation by protein N is coupled to RNA synthesis and all replicative products are resistant to nucleases (By similarity).</text>
</comment>
<comment type="subunit">
    <text evidence="1">Homomultimerizes to form the nucleocapsid. Binds to viral genomic RNA (By similarity).</text>
</comment>
<comment type="subcellular location">
    <subcellularLocation>
        <location>Virion</location>
    </subcellularLocation>
    <subcellularLocation>
        <location evidence="1">Host cytoplasm</location>
    </subcellularLocation>
</comment>
<comment type="PTM">
    <text evidence="1">Phosphorylated by host.</text>
</comment>
<comment type="similarity">
    <text evidence="2">Belongs to the lyssavirus nucleocapsid protein family.</text>
</comment>
<dbReference type="EMBL" id="U22847">
    <property type="protein sequence ID" value="AAA80289.1"/>
    <property type="molecule type" value="Genomic_RNA"/>
</dbReference>
<dbReference type="EMBL" id="AY863403">
    <property type="protein sequence ID" value="AAX62917.1"/>
    <property type="molecule type" value="Genomic_RNA"/>
</dbReference>
<dbReference type="EMBL" id="AY863404">
    <property type="protein sequence ID" value="AAX62918.1"/>
    <property type="molecule type" value="Genomic_RNA"/>
</dbReference>
<dbReference type="EMBL" id="AY863405">
    <property type="protein sequence ID" value="AAX62919.1"/>
    <property type="molecule type" value="Genomic_RNA"/>
</dbReference>
<dbReference type="EMBL" id="AY863407">
    <property type="protein sequence ID" value="AAX62921.1"/>
    <property type="molecule type" value="Genomic_RNA"/>
</dbReference>
<dbReference type="EMBL" id="AY863408">
    <property type="protein sequence ID" value="AAX62922.1"/>
    <property type="molecule type" value="Genomic_RNA"/>
</dbReference>
<dbReference type="EMBL" id="EF157977">
    <property type="protein sequence ID" value="ABO65248.1"/>
    <property type="molecule type" value="Genomic_RNA"/>
</dbReference>
<dbReference type="RefSeq" id="YP_001285393.1">
    <property type="nucleotide sequence ID" value="NC_009528.2"/>
</dbReference>
<dbReference type="SMR" id="A4UHQ3"/>
<dbReference type="GeneID" id="5219913"/>
<dbReference type="KEGG" id="vg:5219913"/>
<dbReference type="Proteomes" id="UP000007206">
    <property type="component" value="Segment"/>
</dbReference>
<dbReference type="GO" id="GO:0019029">
    <property type="term" value="C:helical viral capsid"/>
    <property type="evidence" value="ECO:0007669"/>
    <property type="project" value="UniProtKB-KW"/>
</dbReference>
<dbReference type="GO" id="GO:0030430">
    <property type="term" value="C:host cell cytoplasm"/>
    <property type="evidence" value="ECO:0007669"/>
    <property type="project" value="UniProtKB-SubCell"/>
</dbReference>
<dbReference type="GO" id="GO:1990904">
    <property type="term" value="C:ribonucleoprotein complex"/>
    <property type="evidence" value="ECO:0007669"/>
    <property type="project" value="UniProtKB-KW"/>
</dbReference>
<dbReference type="GO" id="GO:0019013">
    <property type="term" value="C:viral nucleocapsid"/>
    <property type="evidence" value="ECO:0007669"/>
    <property type="project" value="UniProtKB-KW"/>
</dbReference>
<dbReference type="GO" id="GO:0003723">
    <property type="term" value="F:RNA binding"/>
    <property type="evidence" value="ECO:0007669"/>
    <property type="project" value="UniProtKB-KW"/>
</dbReference>
<dbReference type="Gene3D" id="1.10.3610.10">
    <property type="entry name" value="Nucleoprotein"/>
    <property type="match status" value="1"/>
</dbReference>
<dbReference type="Gene3D" id="1.10.3570.10">
    <property type="entry name" value="Rhabdovirus nucleocapsid protein like domain"/>
    <property type="match status" value="1"/>
</dbReference>
<dbReference type="InterPro" id="IPR000448">
    <property type="entry name" value="Rhabdo_ncapsid"/>
</dbReference>
<dbReference type="InterPro" id="IPR023331">
    <property type="entry name" value="Rhabdovirus_ncapsid_C"/>
</dbReference>
<dbReference type="InterPro" id="IPR023330">
    <property type="entry name" value="Rhabdovirus_ncapsid_N"/>
</dbReference>
<dbReference type="InterPro" id="IPR035961">
    <property type="entry name" value="Rhabdovirus_nucleoprotein-like"/>
</dbReference>
<dbReference type="Pfam" id="PF00945">
    <property type="entry name" value="Rhabdo_ncap"/>
    <property type="match status" value="1"/>
</dbReference>
<dbReference type="SUPFAM" id="SSF140809">
    <property type="entry name" value="Rhabdovirus nucleoprotein-like"/>
    <property type="match status" value="1"/>
</dbReference>
<sequence>MDADRIVFKVHNQLVSVKPEVIVDQYEYKYPAIKDRKKPSITLGKAPDLNRAYKSILSGINAARLDPDDVCSYLAAAMALFEGICPDDWESYGILIARKGDKITPANLVNIQRTDVEGNWALAGGLDVIKDPTTAEHASLVGLLLCLYRLSKVSGQNTGNYKTNVADRMEQIFETAPFVKIVEHHTLMTTHKMCANWSTIPNFRFLAGTYDMFFSRIEHLYSAIRVGTVVTAYEDCSGLVSFTGFIRQINLTAKEAILYFFHKNFEEEIKRMFEPGQETAVPHSYFIHFRSLGLSGKSPYSSNAVGHVFNLIHFVGSYMGQVRSLNATVIATCAPHEMSVLGGYLGEEFFGKGTFERRFFRDERELAEHEAIESTKTDVALADDGTVNSDDEELYSGGTRTPEAVYTRIMVNGGKLKKSHIKRYVSVSSNHQARPNSFAEFLNKTYSSDPR</sequence>
<name>NCAP_EBLV2</name>
<keyword id="KW-0167">Capsid protein</keyword>
<keyword id="KW-1139">Helical capsid protein</keyword>
<keyword id="KW-1035">Host cytoplasm</keyword>
<keyword id="KW-0597">Phosphoprotein</keyword>
<keyword id="KW-1185">Reference proteome</keyword>
<keyword id="KW-0687">Ribonucleoprotein</keyword>
<keyword id="KW-0694">RNA-binding</keyword>
<keyword id="KW-0543">Viral nucleoprotein</keyword>
<keyword id="KW-0946">Virion</keyword>
<organismHost>
    <name type="scientific">Mammalia</name>
    <dbReference type="NCBI Taxonomy" id="40674"/>
</organismHost>